<sequence length="73" mass="8123">MGSFSIWHWLIVLVIVMLVFGTKKLRNIGQDLGGAVKGFKDGMKTFEEPKEQIQQSSATAEKTVDVQAKDVNK</sequence>
<gene>
    <name evidence="1" type="primary">tatA</name>
    <name type="ordered locus">Pnec_0115</name>
</gene>
<organism>
    <name type="scientific">Polynucleobacter necessarius subsp. necessarius (strain STIR1)</name>
    <dbReference type="NCBI Taxonomy" id="452638"/>
    <lineage>
        <taxon>Bacteria</taxon>
        <taxon>Pseudomonadati</taxon>
        <taxon>Pseudomonadota</taxon>
        <taxon>Betaproteobacteria</taxon>
        <taxon>Burkholderiales</taxon>
        <taxon>Burkholderiaceae</taxon>
        <taxon>Polynucleobacter</taxon>
    </lineage>
</organism>
<name>TATA_POLNS</name>
<keyword id="KW-0997">Cell inner membrane</keyword>
<keyword id="KW-1003">Cell membrane</keyword>
<keyword id="KW-0472">Membrane</keyword>
<keyword id="KW-0653">Protein transport</keyword>
<keyword id="KW-0811">Translocation</keyword>
<keyword id="KW-0812">Transmembrane</keyword>
<keyword id="KW-1133">Transmembrane helix</keyword>
<keyword id="KW-0813">Transport</keyword>
<proteinExistence type="inferred from homology"/>
<protein>
    <recommendedName>
        <fullName evidence="1">Sec-independent protein translocase protein TatA</fullName>
    </recommendedName>
</protein>
<evidence type="ECO:0000255" key="1">
    <source>
        <dbReference type="HAMAP-Rule" id="MF_00236"/>
    </source>
</evidence>
<evidence type="ECO:0000256" key="2">
    <source>
        <dbReference type="SAM" id="MobiDB-lite"/>
    </source>
</evidence>
<accession>B1XSV7</accession>
<comment type="function">
    <text evidence="1">Part of the twin-arginine translocation (Tat) system that transports large folded proteins containing a characteristic twin-arginine motif in their signal peptide across membranes. TatA could form the protein-conducting channel of the Tat system.</text>
</comment>
<comment type="subunit">
    <text evidence="1">The Tat system comprises two distinct complexes: a TatABC complex, containing multiple copies of TatA, TatB and TatC subunits, and a separate TatA complex, containing only TatA subunits. Substrates initially bind to the TatABC complex, which probably triggers association of the separate TatA complex to form the active translocon.</text>
</comment>
<comment type="subcellular location">
    <subcellularLocation>
        <location evidence="1">Cell inner membrane</location>
        <topology evidence="1">Single-pass membrane protein</topology>
    </subcellularLocation>
</comment>
<comment type="similarity">
    <text evidence="1">Belongs to the TatA/E family.</text>
</comment>
<dbReference type="EMBL" id="CP001010">
    <property type="protein sequence ID" value="ACB43434.1"/>
    <property type="molecule type" value="Genomic_DNA"/>
</dbReference>
<dbReference type="SMR" id="B1XSV7"/>
<dbReference type="STRING" id="452638.Pnec_0115"/>
<dbReference type="KEGG" id="pne:Pnec_0115"/>
<dbReference type="eggNOG" id="COG1826">
    <property type="taxonomic scope" value="Bacteria"/>
</dbReference>
<dbReference type="HOGENOM" id="CLU_086034_5_3_4"/>
<dbReference type="OrthoDB" id="7066617at2"/>
<dbReference type="GO" id="GO:0033281">
    <property type="term" value="C:TAT protein transport complex"/>
    <property type="evidence" value="ECO:0007669"/>
    <property type="project" value="UniProtKB-UniRule"/>
</dbReference>
<dbReference type="GO" id="GO:0008320">
    <property type="term" value="F:protein transmembrane transporter activity"/>
    <property type="evidence" value="ECO:0007669"/>
    <property type="project" value="UniProtKB-UniRule"/>
</dbReference>
<dbReference type="GO" id="GO:0043953">
    <property type="term" value="P:protein transport by the Tat complex"/>
    <property type="evidence" value="ECO:0007669"/>
    <property type="project" value="UniProtKB-UniRule"/>
</dbReference>
<dbReference type="Gene3D" id="1.20.5.3310">
    <property type="match status" value="1"/>
</dbReference>
<dbReference type="HAMAP" id="MF_00236">
    <property type="entry name" value="TatA_E"/>
    <property type="match status" value="1"/>
</dbReference>
<dbReference type="InterPro" id="IPR003369">
    <property type="entry name" value="TatA/B/E"/>
</dbReference>
<dbReference type="InterPro" id="IPR006312">
    <property type="entry name" value="TatA/E"/>
</dbReference>
<dbReference type="NCBIfam" id="NF002813">
    <property type="entry name" value="PRK02958.1"/>
    <property type="match status" value="1"/>
</dbReference>
<dbReference type="NCBIfam" id="TIGR01411">
    <property type="entry name" value="tatAE"/>
    <property type="match status" value="1"/>
</dbReference>
<dbReference type="PANTHER" id="PTHR42982">
    <property type="entry name" value="SEC-INDEPENDENT PROTEIN TRANSLOCASE PROTEIN TATA"/>
    <property type="match status" value="1"/>
</dbReference>
<dbReference type="PANTHER" id="PTHR42982:SF1">
    <property type="entry name" value="SEC-INDEPENDENT PROTEIN TRANSLOCASE PROTEIN TATA"/>
    <property type="match status" value="1"/>
</dbReference>
<dbReference type="Pfam" id="PF02416">
    <property type="entry name" value="TatA_B_E"/>
    <property type="match status" value="1"/>
</dbReference>
<feature type="chain" id="PRO_1000197892" description="Sec-independent protein translocase protein TatA">
    <location>
        <begin position="1"/>
        <end position="73"/>
    </location>
</feature>
<feature type="transmembrane region" description="Helical" evidence="1">
    <location>
        <begin position="1"/>
        <end position="21"/>
    </location>
</feature>
<feature type="region of interest" description="Disordered" evidence="2">
    <location>
        <begin position="50"/>
        <end position="73"/>
    </location>
</feature>
<feature type="compositionally biased region" description="Basic and acidic residues" evidence="2">
    <location>
        <begin position="62"/>
        <end position="73"/>
    </location>
</feature>
<reference key="1">
    <citation type="journal article" date="2013" name="Proc. Natl. Acad. Sci. U.S.A.">
        <title>Polynucleobacter necessarius, a model for genome reduction in both free-living and symbiotic bacteria.</title>
        <authorList>
            <person name="Boscaro V."/>
            <person name="Felletti M."/>
            <person name="Vannini C."/>
            <person name="Ackerman M.S."/>
            <person name="Chain P.S."/>
            <person name="Malfatti S."/>
            <person name="Vergez L.M."/>
            <person name="Shin M."/>
            <person name="Doak T.G."/>
            <person name="Lynch M."/>
            <person name="Petroni G."/>
        </authorList>
    </citation>
    <scope>NUCLEOTIDE SEQUENCE [LARGE SCALE GENOMIC DNA]</scope>
    <source>
        <strain>STIR1</strain>
    </source>
</reference>